<sequence length="332" mass="36417">MMKKPVVIGLAVVVLAAVVAGGYWWYQSRQDNGLTLYGNVDIRTVNLSFRVGGRVESLAVDEGDAIKAGQVLGELDHKPYEIALMQAKAGVSVAQAQYDLMLAGYRDEEIAQAAAAVKQAQAAYDYAQNFYNRQQGLWKSRTISANDLENARSSRDQAQATLKSAQDKLRQYRSGNREQDIAQAKASLEQAQAQLAQAELNLQDSTLIAPSDGTLLTRAVEPGTVLNEGGTVFTVSLTRPVWVRAYVDERNLDQAQPGRKVLLYTDGRPDKPYHGQIGFVSPTAEFTPKTVETPDLRTDLVYRLRIVVTDADDALRQGMPVTVQFGDEAGHE</sequence>
<reference key="1">
    <citation type="journal article" date="2009" name="J. Bacteriol.">
        <title>Complete genome sequence and comparative genome analysis of enteropathogenic Escherichia coli O127:H6 strain E2348/69.</title>
        <authorList>
            <person name="Iguchi A."/>
            <person name="Thomson N.R."/>
            <person name="Ogura Y."/>
            <person name="Saunders D."/>
            <person name="Ooka T."/>
            <person name="Henderson I.R."/>
            <person name="Harris D."/>
            <person name="Asadulghani M."/>
            <person name="Kurokawa K."/>
            <person name="Dean P."/>
            <person name="Kenny B."/>
            <person name="Quail M.A."/>
            <person name="Thurston S."/>
            <person name="Dougan G."/>
            <person name="Hayashi T."/>
            <person name="Parkhill J."/>
            <person name="Frankel G."/>
        </authorList>
    </citation>
    <scope>NUCLEOTIDE SEQUENCE [LARGE SCALE GENOMIC DNA]</scope>
    <source>
        <strain>E2348/69 / EPEC</strain>
    </source>
</reference>
<gene>
    <name evidence="1" type="primary">ybhG</name>
    <name type="ordered locus">E2348C_0747</name>
</gene>
<organism>
    <name type="scientific">Escherichia coli O127:H6 (strain E2348/69 / EPEC)</name>
    <dbReference type="NCBI Taxonomy" id="574521"/>
    <lineage>
        <taxon>Bacteria</taxon>
        <taxon>Pseudomonadati</taxon>
        <taxon>Pseudomonadota</taxon>
        <taxon>Gammaproteobacteria</taxon>
        <taxon>Enterobacterales</taxon>
        <taxon>Enterobacteriaceae</taxon>
        <taxon>Escherichia</taxon>
    </lineage>
</organism>
<accession>B7ULZ2</accession>
<feature type="signal peptide" evidence="1">
    <location>
        <begin position="1"/>
        <end position="16"/>
    </location>
</feature>
<feature type="chain" id="PRO_1000165366" description="UPF0194 membrane protein YbhG">
    <location>
        <begin position="17"/>
        <end position="332"/>
    </location>
</feature>
<feature type="coiled-coil region" evidence="1">
    <location>
        <begin position="108"/>
        <end position="209"/>
    </location>
</feature>
<proteinExistence type="inferred from homology"/>
<protein>
    <recommendedName>
        <fullName evidence="1">UPF0194 membrane protein YbhG</fullName>
    </recommendedName>
</protein>
<evidence type="ECO:0000255" key="1">
    <source>
        <dbReference type="HAMAP-Rule" id="MF_01304"/>
    </source>
</evidence>
<dbReference type="EMBL" id="FM180568">
    <property type="protein sequence ID" value="CAS08295.1"/>
    <property type="molecule type" value="Genomic_DNA"/>
</dbReference>
<dbReference type="SMR" id="B7ULZ2"/>
<dbReference type="KEGG" id="ecg:E2348C_0747"/>
<dbReference type="HOGENOM" id="CLU_018816_6_3_6"/>
<dbReference type="Proteomes" id="UP000008205">
    <property type="component" value="Chromosome"/>
</dbReference>
<dbReference type="GO" id="GO:0042597">
    <property type="term" value="C:periplasmic space"/>
    <property type="evidence" value="ECO:0007669"/>
    <property type="project" value="UniProtKB-SubCell"/>
</dbReference>
<dbReference type="FunFam" id="1.10.287.470:FF:000004">
    <property type="entry name" value="UPF0194 membrane protein YbhG"/>
    <property type="match status" value="1"/>
</dbReference>
<dbReference type="FunFam" id="2.40.30.170:FF:000005">
    <property type="entry name" value="UPF0194 membrane protein YbhG"/>
    <property type="match status" value="1"/>
</dbReference>
<dbReference type="FunFam" id="2.40.50.100:FF:000025">
    <property type="entry name" value="UPF0194 membrane protein YbhG"/>
    <property type="match status" value="1"/>
</dbReference>
<dbReference type="Gene3D" id="2.40.30.170">
    <property type="match status" value="1"/>
</dbReference>
<dbReference type="Gene3D" id="2.40.50.100">
    <property type="match status" value="2"/>
</dbReference>
<dbReference type="Gene3D" id="1.10.287.470">
    <property type="entry name" value="Helix hairpin bin"/>
    <property type="match status" value="1"/>
</dbReference>
<dbReference type="HAMAP" id="MF_01304">
    <property type="entry name" value="UPF0194"/>
    <property type="match status" value="1"/>
</dbReference>
<dbReference type="InterPro" id="IPR032317">
    <property type="entry name" value="CusB_D23"/>
</dbReference>
<dbReference type="InterPro" id="IPR022936">
    <property type="entry name" value="UPF0194_membrane_YbhG"/>
</dbReference>
<dbReference type="InterPro" id="IPR050465">
    <property type="entry name" value="UPF0194_transport"/>
</dbReference>
<dbReference type="NCBIfam" id="NF002939">
    <property type="entry name" value="PRK03598.1"/>
    <property type="match status" value="1"/>
</dbReference>
<dbReference type="PANTHER" id="PTHR32347">
    <property type="entry name" value="EFFLUX SYSTEM COMPONENT YKNX-RELATED"/>
    <property type="match status" value="1"/>
</dbReference>
<dbReference type="PANTHER" id="PTHR32347:SF29">
    <property type="entry name" value="UPF0194 MEMBRANE PROTEIN YBHG"/>
    <property type="match status" value="1"/>
</dbReference>
<dbReference type="Pfam" id="PF16576">
    <property type="entry name" value="HlyD_D23"/>
    <property type="match status" value="1"/>
</dbReference>
<dbReference type="SUPFAM" id="SSF111369">
    <property type="entry name" value="HlyD-like secretion proteins"/>
    <property type="match status" value="2"/>
</dbReference>
<dbReference type="SUPFAM" id="SSF56954">
    <property type="entry name" value="Outer membrane efflux proteins (OEP)"/>
    <property type="match status" value="1"/>
</dbReference>
<comment type="subcellular location">
    <subcellularLocation>
        <location evidence="1">Periplasm</location>
    </subcellularLocation>
</comment>
<comment type="similarity">
    <text evidence="1">Belongs to the UPF0194 family.</text>
</comment>
<name>YBHG_ECO27</name>
<keyword id="KW-0175">Coiled coil</keyword>
<keyword id="KW-0574">Periplasm</keyword>
<keyword id="KW-1185">Reference proteome</keyword>
<keyword id="KW-0732">Signal</keyword>